<protein>
    <recommendedName>
        <fullName evidence="1">Ribosomal RNA small subunit methyltransferase H</fullName>
        <ecNumber evidence="1">2.1.1.199</ecNumber>
    </recommendedName>
    <alternativeName>
        <fullName evidence="1">16S rRNA m(4)C1402 methyltransferase</fullName>
    </alternativeName>
    <alternativeName>
        <fullName evidence="1">rRNA (cytosine-N(4)-)-methyltransferase RsmH</fullName>
    </alternativeName>
</protein>
<comment type="function">
    <text evidence="1">Specifically methylates the N4 position of cytidine in position 1402 (C1402) of 16S rRNA.</text>
</comment>
<comment type="catalytic activity">
    <reaction evidence="1">
        <text>cytidine(1402) in 16S rRNA + S-adenosyl-L-methionine = N(4)-methylcytidine(1402) in 16S rRNA + S-adenosyl-L-homocysteine + H(+)</text>
        <dbReference type="Rhea" id="RHEA:42928"/>
        <dbReference type="Rhea" id="RHEA-COMP:10286"/>
        <dbReference type="Rhea" id="RHEA-COMP:10287"/>
        <dbReference type="ChEBI" id="CHEBI:15378"/>
        <dbReference type="ChEBI" id="CHEBI:57856"/>
        <dbReference type="ChEBI" id="CHEBI:59789"/>
        <dbReference type="ChEBI" id="CHEBI:74506"/>
        <dbReference type="ChEBI" id="CHEBI:82748"/>
        <dbReference type="EC" id="2.1.1.199"/>
    </reaction>
</comment>
<comment type="subcellular location">
    <subcellularLocation>
        <location evidence="1">Cytoplasm</location>
    </subcellularLocation>
</comment>
<comment type="similarity">
    <text evidence="1">Belongs to the methyltransferase superfamily. RsmH family.</text>
</comment>
<feature type="chain" id="PRO_0000386936" description="Ribosomal RNA small subunit methyltransferase H">
    <location>
        <begin position="1"/>
        <end position="313"/>
    </location>
</feature>
<feature type="binding site" evidence="1">
    <location>
        <begin position="35"/>
        <end position="37"/>
    </location>
    <ligand>
        <name>S-adenosyl-L-methionine</name>
        <dbReference type="ChEBI" id="CHEBI:59789"/>
    </ligand>
</feature>
<feature type="binding site" evidence="1">
    <location>
        <position position="55"/>
    </location>
    <ligand>
        <name>S-adenosyl-L-methionine</name>
        <dbReference type="ChEBI" id="CHEBI:59789"/>
    </ligand>
</feature>
<feature type="binding site" evidence="1">
    <location>
        <position position="79"/>
    </location>
    <ligand>
        <name>S-adenosyl-L-methionine</name>
        <dbReference type="ChEBI" id="CHEBI:59789"/>
    </ligand>
</feature>
<feature type="binding site" evidence="1">
    <location>
        <position position="101"/>
    </location>
    <ligand>
        <name>S-adenosyl-L-methionine</name>
        <dbReference type="ChEBI" id="CHEBI:59789"/>
    </ligand>
</feature>
<feature type="binding site" evidence="1">
    <location>
        <position position="108"/>
    </location>
    <ligand>
        <name>S-adenosyl-L-methionine</name>
        <dbReference type="ChEBI" id="CHEBI:59789"/>
    </ligand>
</feature>
<dbReference type="EC" id="2.1.1.199" evidence="1"/>
<dbReference type="EMBL" id="CP000647">
    <property type="protein sequence ID" value="ABR75546.1"/>
    <property type="molecule type" value="Genomic_DNA"/>
</dbReference>
<dbReference type="RefSeq" id="WP_002888547.1">
    <property type="nucleotide sequence ID" value="NC_009648.1"/>
</dbReference>
<dbReference type="SMR" id="A6T4M5"/>
<dbReference type="STRING" id="272620.KPN_00086"/>
<dbReference type="jPOST" id="A6T4M5"/>
<dbReference type="PaxDb" id="272620-KPN_00086"/>
<dbReference type="EnsemblBacteria" id="ABR75546">
    <property type="protein sequence ID" value="ABR75546"/>
    <property type="gene ID" value="KPN_00086"/>
</dbReference>
<dbReference type="KEGG" id="kpn:KPN_00086"/>
<dbReference type="HOGENOM" id="CLU_038422_2_0_6"/>
<dbReference type="Proteomes" id="UP000000265">
    <property type="component" value="Chromosome"/>
</dbReference>
<dbReference type="GO" id="GO:0005737">
    <property type="term" value="C:cytoplasm"/>
    <property type="evidence" value="ECO:0007669"/>
    <property type="project" value="UniProtKB-SubCell"/>
</dbReference>
<dbReference type="GO" id="GO:0071424">
    <property type="term" value="F:rRNA (cytosine-N4-)-methyltransferase activity"/>
    <property type="evidence" value="ECO:0007669"/>
    <property type="project" value="UniProtKB-UniRule"/>
</dbReference>
<dbReference type="GO" id="GO:0070475">
    <property type="term" value="P:rRNA base methylation"/>
    <property type="evidence" value="ECO:0007669"/>
    <property type="project" value="UniProtKB-UniRule"/>
</dbReference>
<dbReference type="FunFam" id="1.10.150.170:FF:000001">
    <property type="entry name" value="Ribosomal RNA small subunit methyltransferase H"/>
    <property type="match status" value="1"/>
</dbReference>
<dbReference type="Gene3D" id="1.10.150.170">
    <property type="entry name" value="Putative methyltransferase TM0872, insert domain"/>
    <property type="match status" value="1"/>
</dbReference>
<dbReference type="Gene3D" id="3.40.50.150">
    <property type="entry name" value="Vaccinia Virus protein VP39"/>
    <property type="match status" value="1"/>
</dbReference>
<dbReference type="HAMAP" id="MF_01007">
    <property type="entry name" value="16SrRNA_methyltr_H"/>
    <property type="match status" value="1"/>
</dbReference>
<dbReference type="InterPro" id="IPR002903">
    <property type="entry name" value="RsmH"/>
</dbReference>
<dbReference type="InterPro" id="IPR023397">
    <property type="entry name" value="SAM-dep_MeTrfase_MraW_recog"/>
</dbReference>
<dbReference type="InterPro" id="IPR029063">
    <property type="entry name" value="SAM-dependent_MTases_sf"/>
</dbReference>
<dbReference type="NCBIfam" id="TIGR00006">
    <property type="entry name" value="16S rRNA (cytosine(1402)-N(4))-methyltransferase RsmH"/>
    <property type="match status" value="1"/>
</dbReference>
<dbReference type="PANTHER" id="PTHR11265:SF0">
    <property type="entry name" value="12S RRNA N4-METHYLCYTIDINE METHYLTRANSFERASE"/>
    <property type="match status" value="1"/>
</dbReference>
<dbReference type="PANTHER" id="PTHR11265">
    <property type="entry name" value="S-ADENOSYL-METHYLTRANSFERASE MRAW"/>
    <property type="match status" value="1"/>
</dbReference>
<dbReference type="Pfam" id="PF01795">
    <property type="entry name" value="Methyltransf_5"/>
    <property type="match status" value="1"/>
</dbReference>
<dbReference type="PIRSF" id="PIRSF004486">
    <property type="entry name" value="MraW"/>
    <property type="match status" value="1"/>
</dbReference>
<dbReference type="SUPFAM" id="SSF81799">
    <property type="entry name" value="Putative methyltransferase TM0872, insert domain"/>
    <property type="match status" value="1"/>
</dbReference>
<dbReference type="SUPFAM" id="SSF53335">
    <property type="entry name" value="S-adenosyl-L-methionine-dependent methyltransferases"/>
    <property type="match status" value="1"/>
</dbReference>
<gene>
    <name evidence="1" type="primary">rsmH</name>
    <name type="synonym">mraW</name>
    <name type="ordered locus">KPN78578_00850</name>
    <name type="ORF">KPN_00086</name>
</gene>
<name>RSMH_KLEP7</name>
<evidence type="ECO:0000255" key="1">
    <source>
        <dbReference type="HAMAP-Rule" id="MF_01007"/>
    </source>
</evidence>
<reference key="1">
    <citation type="submission" date="2006-09" db="EMBL/GenBank/DDBJ databases">
        <authorList>
            <consortium name="The Klebsiella pneumonia Genome Sequencing Project"/>
            <person name="McClelland M."/>
            <person name="Sanderson E.K."/>
            <person name="Spieth J."/>
            <person name="Clifton W.S."/>
            <person name="Latreille P."/>
            <person name="Sabo A."/>
            <person name="Pepin K."/>
            <person name="Bhonagiri V."/>
            <person name="Porwollik S."/>
            <person name="Ali J."/>
            <person name="Wilson R.K."/>
        </authorList>
    </citation>
    <scope>NUCLEOTIDE SEQUENCE [LARGE SCALE GENOMIC DNA]</scope>
    <source>
        <strain>ATCC 700721 / MGH 78578</strain>
    </source>
</reference>
<organism>
    <name type="scientific">Klebsiella pneumoniae subsp. pneumoniae (strain ATCC 700721 / MGH 78578)</name>
    <dbReference type="NCBI Taxonomy" id="272620"/>
    <lineage>
        <taxon>Bacteria</taxon>
        <taxon>Pseudomonadati</taxon>
        <taxon>Pseudomonadota</taxon>
        <taxon>Gammaproteobacteria</taxon>
        <taxon>Enterobacterales</taxon>
        <taxon>Enterobacteriaceae</taxon>
        <taxon>Klebsiella/Raoultella group</taxon>
        <taxon>Klebsiella</taxon>
        <taxon>Klebsiella pneumoniae complex</taxon>
    </lineage>
</organism>
<accession>A6T4M5</accession>
<sequence>MMENYKHTTVLLDEAVNGLNIRPDGIYIDGTFGRGGHSRLILSRLGAEGRLLAIDRDPQAIAVAQTIDDPRFSIVHGPFSQLAEYVGERNLTGKIDGILLDLGVSSPQLDDAERGFSFMRDGPLDMRMDPTRGQSAAEWLQTAEEDDIAWVIKTFGEERFGKRIARAIVERNRIQPMTRTKELAEVIAAAMPVKDKHKHPATRTFQAVRIWVNSELEEIEQALKSSLSVLAPGGRLSIISFHSLEDRIVKRFMREQSRGPQVPAGIPMTEAQLKKLGGRELRALGKLMPGEEEVAENPRARSSVLRIAERTNA</sequence>
<keyword id="KW-0963">Cytoplasm</keyword>
<keyword id="KW-0489">Methyltransferase</keyword>
<keyword id="KW-0698">rRNA processing</keyword>
<keyword id="KW-0949">S-adenosyl-L-methionine</keyword>
<keyword id="KW-0808">Transferase</keyword>
<proteinExistence type="inferred from homology"/>